<feature type="chain" id="PRO_1000188967" description="G/U mismatch-specific DNA glycosylase">
    <location>
        <begin position="1"/>
        <end position="168"/>
    </location>
</feature>
<reference key="1">
    <citation type="journal article" date="2011" name="J. Bacteriol.">
        <title>Comparative genomics of 28 Salmonella enterica isolates: evidence for CRISPR-mediated adaptive sublineage evolution.</title>
        <authorList>
            <person name="Fricke W.F."/>
            <person name="Mammel M.K."/>
            <person name="McDermott P.F."/>
            <person name="Tartera C."/>
            <person name="White D.G."/>
            <person name="Leclerc J.E."/>
            <person name="Ravel J."/>
            <person name="Cebula T.A."/>
        </authorList>
    </citation>
    <scope>NUCLEOTIDE SEQUENCE [LARGE SCALE GENOMIC DNA]</scope>
    <source>
        <strain>SL254</strain>
    </source>
</reference>
<accession>B4T682</accession>
<sequence length="168" mass="18650">MVKDILAPGLRVVFCGINPGLSSANTGFPFAHPANRFWKVIHLAGFTDRQLKPEEAEKLLDFRCGVTKLVDRPTVQATEVKLHELRSGGRNLIEKIEDYQPAALAVLGKQAFEQGFSQRGIAWGKQKIAIGATMVWVLPNPSGLNRIKTEKLVEAYRELDQALIMRGL</sequence>
<evidence type="ECO:0000255" key="1">
    <source>
        <dbReference type="HAMAP-Rule" id="MF_01956"/>
    </source>
</evidence>
<protein>
    <recommendedName>
        <fullName evidence="1">G/U mismatch-specific DNA glycosylase</fullName>
        <ecNumber evidence="1">3.2.2.28</ecNumber>
    </recommendedName>
    <alternativeName>
        <fullName evidence="1">Double-strand-specific uracil glycosylase</fullName>
    </alternativeName>
    <alternativeName>
        <fullName evidence="1">Mismatch-specific uracil DNA-glycosylase</fullName>
        <shortName evidence="1">MUG</shortName>
    </alternativeName>
</protein>
<name>MUG_SALNS</name>
<comment type="function">
    <text evidence="1">Excises ethenocytosine and uracil, which can arise by alkylation or deamination of cytosine, respectively, from the corresponding mispairs with guanine in ds-DNA. It is capable of hydrolyzing the carbon-nitrogen bond between the sugar-phosphate backbone of the DNA and the mispaired base. The complementary strand guanine functions in substrate recognition. Required for DNA damage lesion repair in stationary-phase cells.</text>
</comment>
<comment type="catalytic activity">
    <reaction evidence="1">
        <text>Specifically hydrolyzes mismatched double-stranded DNA and polynucleotides, releasing free uracil.</text>
        <dbReference type="EC" id="3.2.2.28"/>
    </reaction>
</comment>
<comment type="subunit">
    <text evidence="1">Binds DNA as a monomer.</text>
</comment>
<comment type="subcellular location">
    <subcellularLocation>
        <location evidence="1">Cytoplasm</location>
    </subcellularLocation>
</comment>
<comment type="similarity">
    <text evidence="1">Belongs to the uracil-DNA glycosylase (UDG) superfamily. TDG/mug family.</text>
</comment>
<gene>
    <name evidence="1" type="primary">mug</name>
    <name type="ordered locus">SNSL254_A3472</name>
</gene>
<organism>
    <name type="scientific">Salmonella newport (strain SL254)</name>
    <dbReference type="NCBI Taxonomy" id="423368"/>
    <lineage>
        <taxon>Bacteria</taxon>
        <taxon>Pseudomonadati</taxon>
        <taxon>Pseudomonadota</taxon>
        <taxon>Gammaproteobacteria</taxon>
        <taxon>Enterobacterales</taxon>
        <taxon>Enterobacteriaceae</taxon>
        <taxon>Salmonella</taxon>
    </lineage>
</organism>
<proteinExistence type="inferred from homology"/>
<keyword id="KW-0963">Cytoplasm</keyword>
<keyword id="KW-0227">DNA damage</keyword>
<keyword id="KW-0228">DNA excision</keyword>
<keyword id="KW-0234">DNA repair</keyword>
<keyword id="KW-0238">DNA-binding</keyword>
<keyword id="KW-0378">Hydrolase</keyword>
<dbReference type="EC" id="3.2.2.28" evidence="1"/>
<dbReference type="EMBL" id="CP001113">
    <property type="protein sequence ID" value="ACF61228.1"/>
    <property type="molecule type" value="Genomic_DNA"/>
</dbReference>
<dbReference type="RefSeq" id="WP_000237776.1">
    <property type="nucleotide sequence ID" value="NZ_CCMR01000001.1"/>
</dbReference>
<dbReference type="SMR" id="B4T682"/>
<dbReference type="KEGG" id="see:SNSL254_A3472"/>
<dbReference type="HOGENOM" id="CLU_042829_3_1_6"/>
<dbReference type="Proteomes" id="UP000008824">
    <property type="component" value="Chromosome"/>
</dbReference>
<dbReference type="GO" id="GO:0005737">
    <property type="term" value="C:cytoplasm"/>
    <property type="evidence" value="ECO:0007669"/>
    <property type="project" value="UniProtKB-SubCell"/>
</dbReference>
<dbReference type="GO" id="GO:0003677">
    <property type="term" value="F:DNA binding"/>
    <property type="evidence" value="ECO:0007669"/>
    <property type="project" value="UniProtKB-KW"/>
</dbReference>
<dbReference type="GO" id="GO:0008263">
    <property type="term" value="F:pyrimidine-specific mismatch base pair DNA N-glycosylase activity"/>
    <property type="evidence" value="ECO:0007669"/>
    <property type="project" value="UniProtKB-UniRule"/>
</dbReference>
<dbReference type="GO" id="GO:0004844">
    <property type="term" value="F:uracil DNA N-glycosylase activity"/>
    <property type="evidence" value="ECO:0007669"/>
    <property type="project" value="TreeGrafter"/>
</dbReference>
<dbReference type="GO" id="GO:0006285">
    <property type="term" value="P:base-excision repair, AP site formation"/>
    <property type="evidence" value="ECO:0007669"/>
    <property type="project" value="UniProtKB-UniRule"/>
</dbReference>
<dbReference type="CDD" id="cd10028">
    <property type="entry name" value="UDG-F2_TDG_MUG"/>
    <property type="match status" value="1"/>
</dbReference>
<dbReference type="Gene3D" id="3.40.470.10">
    <property type="entry name" value="Uracil-DNA glycosylase-like domain"/>
    <property type="match status" value="1"/>
</dbReference>
<dbReference type="HAMAP" id="MF_01956">
    <property type="entry name" value="MUG"/>
    <property type="match status" value="1"/>
</dbReference>
<dbReference type="InterPro" id="IPR015637">
    <property type="entry name" value="MUG/TDG"/>
</dbReference>
<dbReference type="InterPro" id="IPR023502">
    <property type="entry name" value="MUG_bact"/>
</dbReference>
<dbReference type="InterPro" id="IPR005122">
    <property type="entry name" value="Uracil-DNA_glycosylase-like"/>
</dbReference>
<dbReference type="InterPro" id="IPR036895">
    <property type="entry name" value="Uracil-DNA_glycosylase-like_sf"/>
</dbReference>
<dbReference type="NCBIfam" id="NF007570">
    <property type="entry name" value="PRK10201.1"/>
    <property type="match status" value="1"/>
</dbReference>
<dbReference type="PANTHER" id="PTHR12159">
    <property type="entry name" value="G/T AND G/U MISMATCH-SPECIFIC DNA GLYCOSYLASE"/>
    <property type="match status" value="1"/>
</dbReference>
<dbReference type="PANTHER" id="PTHR12159:SF9">
    <property type="entry name" value="G_T MISMATCH-SPECIFIC THYMINE DNA GLYCOSYLASE"/>
    <property type="match status" value="1"/>
</dbReference>
<dbReference type="Pfam" id="PF03167">
    <property type="entry name" value="UDG"/>
    <property type="match status" value="1"/>
</dbReference>
<dbReference type="SUPFAM" id="SSF52141">
    <property type="entry name" value="Uracil-DNA glycosylase-like"/>
    <property type="match status" value="1"/>
</dbReference>